<gene>
    <name type="primary">IRC6</name>
    <name type="ORF">EC1118_1F14_1453g</name>
</gene>
<organism>
    <name type="scientific">Saccharomyces cerevisiae (strain Lalvin EC1118 / Prise de mousse)</name>
    <name type="common">Baker's yeast</name>
    <dbReference type="NCBI Taxonomy" id="643680"/>
    <lineage>
        <taxon>Eukaryota</taxon>
        <taxon>Fungi</taxon>
        <taxon>Dikarya</taxon>
        <taxon>Ascomycota</taxon>
        <taxon>Saccharomycotina</taxon>
        <taxon>Saccharomycetes</taxon>
        <taxon>Saccharomycetales</taxon>
        <taxon>Saccharomycetaceae</taxon>
        <taxon>Saccharomyces</taxon>
    </lineage>
</organism>
<reference key="1">
    <citation type="journal article" date="2009" name="Proc. Natl. Acad. Sci. U.S.A.">
        <title>Eukaryote-to-eukaryote gene transfer events revealed by the genome sequence of the wine yeast Saccharomyces cerevisiae EC1118.</title>
        <authorList>
            <person name="Novo M."/>
            <person name="Bigey F."/>
            <person name="Beyne E."/>
            <person name="Galeote V."/>
            <person name="Gavory F."/>
            <person name="Mallet S."/>
            <person name="Cambon B."/>
            <person name="Legras J.-L."/>
            <person name="Wincker P."/>
            <person name="Casaregola S."/>
            <person name="Dequin S."/>
        </authorList>
    </citation>
    <scope>NUCLEOTIDE SEQUENCE [LARGE SCALE GENOMIC DNA]</scope>
    <source>
        <strain>Lalvin EC1118 / Prise de mousse</strain>
    </source>
</reference>
<proteinExistence type="inferred from homology"/>
<accession>C8Z7X8</accession>
<evidence type="ECO:0000250" key="1"/>
<evidence type="ECO:0000305" key="2"/>
<keyword id="KW-0160">Chromosomal rearrangement</keyword>
<dbReference type="EMBL" id="FN393068">
    <property type="protein sequence ID" value="CAY79494.1"/>
    <property type="molecule type" value="Genomic_DNA"/>
</dbReference>
<dbReference type="SMR" id="C8Z7X8"/>
<dbReference type="HOGENOM" id="CLU_079666_0_0_1"/>
<dbReference type="OrthoDB" id="39866at4893"/>
<dbReference type="Proteomes" id="UP000000286">
    <property type="component" value="Chromosome VI, Scaffold EC1118_1F14"/>
</dbReference>
<dbReference type="GO" id="GO:0030674">
    <property type="term" value="F:protein-macromolecule adaptor activity"/>
    <property type="evidence" value="ECO:0007669"/>
    <property type="project" value="TreeGrafter"/>
</dbReference>
<dbReference type="GO" id="GO:0016192">
    <property type="term" value="P:vesicle-mediated transport"/>
    <property type="evidence" value="ECO:0007669"/>
    <property type="project" value="InterPro"/>
</dbReference>
<dbReference type="FunFam" id="3.40.50.11960:FF:000002">
    <property type="entry name" value="Increased recombination centers protein 6"/>
    <property type="match status" value="1"/>
</dbReference>
<dbReference type="Gene3D" id="3.40.50.11960">
    <property type="match status" value="1"/>
</dbReference>
<dbReference type="InterPro" id="IPR034627">
    <property type="entry name" value="Irc6"/>
</dbReference>
<dbReference type="PANTHER" id="PTHR28043">
    <property type="entry name" value="INCREASED RECOMBINATION CENTERS PROTEIN 6"/>
    <property type="match status" value="1"/>
</dbReference>
<dbReference type="PANTHER" id="PTHR28043:SF1">
    <property type="entry name" value="INCREASED RECOMBINATION CENTERS PROTEIN 6"/>
    <property type="match status" value="1"/>
</dbReference>
<feature type="chain" id="PRO_0000399230" description="Increased recombination centers protein 6">
    <location>
        <begin position="1"/>
        <end position="237"/>
    </location>
</feature>
<sequence>MVLQYPQNKILVLSDHPHNFSKTQFLQDLFHCSSTGISIVKDQTWENRYYKVHFDLYIDSCKDIPVWVEEFITPECEPLRNVMAGIILITDIRQTKPQELLHQFMIAAHRNTFVVLVNVNEEVEQDEIDELNEIWSNAFTNVIEFVNWKRSKPTVNHNDYGEKLGLDRIQEIIDTHDWLNCEVLPATKIREEIPNEMPLEQIIRNLQSARLKYKSIENSSEADAFANEMADELSRYL</sequence>
<protein>
    <recommendedName>
        <fullName>Increased recombination centers protein 6</fullName>
    </recommendedName>
</protein>
<comment type="function">
    <text evidence="1">Involved in gross chromosomal rearrangements (GCRs) and telomere healing.</text>
</comment>
<comment type="similarity">
    <text evidence="2">Belongs to the IRC6 family.</text>
</comment>
<name>IRC6_YEAS8</name>